<keyword id="KW-0029">Amino-acid transport</keyword>
<keyword id="KW-0997">Cell inner membrane</keyword>
<keyword id="KW-1003">Cell membrane</keyword>
<keyword id="KW-0472">Membrane</keyword>
<keyword id="KW-0812">Transmembrane</keyword>
<keyword id="KW-1133">Transmembrane helix</keyword>
<keyword id="KW-0813">Transport</keyword>
<organism>
    <name type="scientific">Salmonella typhi</name>
    <dbReference type="NCBI Taxonomy" id="90370"/>
    <lineage>
        <taxon>Bacteria</taxon>
        <taxon>Pseudomonadati</taxon>
        <taxon>Pseudomonadota</taxon>
        <taxon>Gammaproteobacteria</taxon>
        <taxon>Enterobacterales</taxon>
        <taxon>Enterobacteriaceae</taxon>
        <taxon>Salmonella</taxon>
    </lineage>
</organism>
<gene>
    <name type="primary">hisM</name>
    <name type="ordered locus">STY2582</name>
    <name type="ordered locus">t0512</name>
</gene>
<protein>
    <recommendedName>
        <fullName evidence="1">Histidine/lysine/arginine/ornithine transport system permease protein HisM</fullName>
    </recommendedName>
</protein>
<reference key="1">
    <citation type="journal article" date="2001" name="Nature">
        <title>Complete genome sequence of a multiple drug resistant Salmonella enterica serovar Typhi CT18.</title>
        <authorList>
            <person name="Parkhill J."/>
            <person name="Dougan G."/>
            <person name="James K.D."/>
            <person name="Thomson N.R."/>
            <person name="Pickard D."/>
            <person name="Wain J."/>
            <person name="Churcher C.M."/>
            <person name="Mungall K.L."/>
            <person name="Bentley S.D."/>
            <person name="Holden M.T.G."/>
            <person name="Sebaihia M."/>
            <person name="Baker S."/>
            <person name="Basham D."/>
            <person name="Brooks K."/>
            <person name="Chillingworth T."/>
            <person name="Connerton P."/>
            <person name="Cronin A."/>
            <person name="Davis P."/>
            <person name="Davies R.M."/>
            <person name="Dowd L."/>
            <person name="White N."/>
            <person name="Farrar J."/>
            <person name="Feltwell T."/>
            <person name="Hamlin N."/>
            <person name="Haque A."/>
            <person name="Hien T.T."/>
            <person name="Holroyd S."/>
            <person name="Jagels K."/>
            <person name="Krogh A."/>
            <person name="Larsen T.S."/>
            <person name="Leather S."/>
            <person name="Moule S."/>
            <person name="O'Gaora P."/>
            <person name="Parry C."/>
            <person name="Quail M.A."/>
            <person name="Rutherford K.M."/>
            <person name="Simmonds M."/>
            <person name="Skelton J."/>
            <person name="Stevens K."/>
            <person name="Whitehead S."/>
            <person name="Barrell B.G."/>
        </authorList>
    </citation>
    <scope>NUCLEOTIDE SEQUENCE [LARGE SCALE GENOMIC DNA]</scope>
    <source>
        <strain>CT18</strain>
    </source>
</reference>
<reference key="2">
    <citation type="journal article" date="2003" name="J. Bacteriol.">
        <title>Comparative genomics of Salmonella enterica serovar Typhi strains Ty2 and CT18.</title>
        <authorList>
            <person name="Deng W."/>
            <person name="Liou S.-R."/>
            <person name="Plunkett G. III"/>
            <person name="Mayhew G.F."/>
            <person name="Rose D.J."/>
            <person name="Burland V."/>
            <person name="Kodoyianni V."/>
            <person name="Schwartz D.C."/>
            <person name="Blattner F.R."/>
        </authorList>
    </citation>
    <scope>NUCLEOTIDE SEQUENCE [LARGE SCALE GENOMIC DNA]</scope>
    <source>
        <strain>ATCC 700931 / Ty2</strain>
    </source>
</reference>
<name>HISM_SALTI</name>
<dbReference type="EMBL" id="AL513382">
    <property type="protein sequence ID" value="CAD07584.1"/>
    <property type="molecule type" value="Genomic_DNA"/>
</dbReference>
<dbReference type="EMBL" id="AE014613">
    <property type="protein sequence ID" value="AAO68218.1"/>
    <property type="molecule type" value="Genomic_DNA"/>
</dbReference>
<dbReference type="RefSeq" id="NP_456894.1">
    <property type="nucleotide sequence ID" value="NC_003198.1"/>
</dbReference>
<dbReference type="RefSeq" id="WP_000569771.1">
    <property type="nucleotide sequence ID" value="NZ_WSUR01000029.1"/>
</dbReference>
<dbReference type="SMR" id="P0A2I8"/>
<dbReference type="STRING" id="220341.gene:17586481"/>
<dbReference type="KEGG" id="stt:t0512"/>
<dbReference type="KEGG" id="sty:STY2582"/>
<dbReference type="PATRIC" id="fig|220341.7.peg.2614"/>
<dbReference type="eggNOG" id="COG4160">
    <property type="taxonomic scope" value="Bacteria"/>
</dbReference>
<dbReference type="HOGENOM" id="CLU_019602_1_4_6"/>
<dbReference type="OMA" id="QLVPMWA"/>
<dbReference type="OrthoDB" id="4404959at2"/>
<dbReference type="Proteomes" id="UP000000541">
    <property type="component" value="Chromosome"/>
</dbReference>
<dbReference type="Proteomes" id="UP000002670">
    <property type="component" value="Chromosome"/>
</dbReference>
<dbReference type="GO" id="GO:0043190">
    <property type="term" value="C:ATP-binding cassette (ABC) transporter complex"/>
    <property type="evidence" value="ECO:0007669"/>
    <property type="project" value="InterPro"/>
</dbReference>
<dbReference type="GO" id="GO:0022857">
    <property type="term" value="F:transmembrane transporter activity"/>
    <property type="evidence" value="ECO:0007669"/>
    <property type="project" value="InterPro"/>
</dbReference>
<dbReference type="GO" id="GO:0006865">
    <property type="term" value="P:amino acid transport"/>
    <property type="evidence" value="ECO:0007669"/>
    <property type="project" value="UniProtKB-KW"/>
</dbReference>
<dbReference type="CDD" id="cd06261">
    <property type="entry name" value="TM_PBP2"/>
    <property type="match status" value="1"/>
</dbReference>
<dbReference type="FunFam" id="1.10.3720.10:FF:000012">
    <property type="entry name" value="Histidine ABC transporter permease HisM"/>
    <property type="match status" value="1"/>
</dbReference>
<dbReference type="Gene3D" id="1.10.3720.10">
    <property type="entry name" value="MetI-like"/>
    <property type="match status" value="1"/>
</dbReference>
<dbReference type="InterPro" id="IPR051322">
    <property type="entry name" value="AA_ABC_Transporter_Permease"/>
</dbReference>
<dbReference type="InterPro" id="IPR010065">
    <property type="entry name" value="AA_ABC_transptr_permease_3TM"/>
</dbReference>
<dbReference type="InterPro" id="IPR000515">
    <property type="entry name" value="MetI-like"/>
</dbReference>
<dbReference type="InterPro" id="IPR035906">
    <property type="entry name" value="MetI-like_sf"/>
</dbReference>
<dbReference type="NCBIfam" id="TIGR01726">
    <property type="entry name" value="HEQRo_perm_3TM"/>
    <property type="match status" value="1"/>
</dbReference>
<dbReference type="NCBIfam" id="NF011651">
    <property type="entry name" value="PRK15069.1"/>
    <property type="match status" value="1"/>
</dbReference>
<dbReference type="PANTHER" id="PTHR30450">
    <property type="entry name" value="ABC TRANSPORTER PERMEASE"/>
    <property type="match status" value="1"/>
</dbReference>
<dbReference type="PANTHER" id="PTHR30450:SF5">
    <property type="entry name" value="HISTIDINE TRANSPORT SYSTEM PERMEASE PROTEIN HISM"/>
    <property type="match status" value="1"/>
</dbReference>
<dbReference type="Pfam" id="PF00528">
    <property type="entry name" value="BPD_transp_1"/>
    <property type="match status" value="1"/>
</dbReference>
<dbReference type="SUPFAM" id="SSF161098">
    <property type="entry name" value="MetI-like"/>
    <property type="match status" value="1"/>
</dbReference>
<dbReference type="PROSITE" id="PS50928">
    <property type="entry name" value="ABC_TM1"/>
    <property type="match status" value="1"/>
</dbReference>
<evidence type="ECO:0000250" key="1">
    <source>
        <dbReference type="UniProtKB" id="P0A2I7"/>
    </source>
</evidence>
<evidence type="ECO:0000255" key="2"/>
<evidence type="ECO:0000255" key="3">
    <source>
        <dbReference type="PROSITE-ProRule" id="PRU00441"/>
    </source>
</evidence>
<evidence type="ECO:0000305" key="4"/>
<proteinExistence type="inferred from homology"/>
<accession>P0A2I8</accession>
<accession>P02912</accession>
<comment type="function">
    <text evidence="1">Part of the ABC transporter complex HisPMQJ involved in histidine transport. Is also part of the ABC transporter complex HisPMQ-ArgT involved in lysine/arginine/ornithine transport. Probably responsible for the translocation of the substrate across the membrane.</text>
</comment>
<comment type="subunit">
    <text evidence="1">The HisPMQJ complex is composed of two ATP-binding proteins (HisP), two transmembrane proteins (HisM and HisQ) and a solute-binding protein (HisJ). The HisPMQ-ArgT complex is composed of two ATP-binding proteins (HisP), two transmembrane proteins (HisM and HisQ) and a solute-binding protein (ArgT).</text>
</comment>
<comment type="subcellular location">
    <subcellularLocation>
        <location evidence="1">Cell inner membrane</location>
        <topology evidence="1">Multi-pass membrane protein</topology>
    </subcellularLocation>
</comment>
<comment type="similarity">
    <text evidence="4">Belongs to the binding-protein-dependent transport system permease family. HisMQ subfamily.</text>
</comment>
<sequence>MIEIIQEYWKSLLWTDGYRFTGVAITLWLLISSVVMGGLLAVILAVGRVSSNKFIRFPIWLFTYIFRGTPLYVQLLVFYSGMYTLEIVKGTDLLNAFFRSGLNCTVLALTLNTCAYTTEIFAGAIRSVPHGEIEAARAYGFSSFKMYRCIILPSALRIALPAYSNEVILMLHSTALAFTATVPDLLKIARDINSATYQPFTAFGIAAVLYLLISYVLISLFRRAERRWLQHVSSK</sequence>
<feature type="chain" id="PRO_0000060047" description="Histidine/lysine/arginine/ornithine transport system permease protein HisM">
    <location>
        <begin position="1"/>
        <end position="235"/>
    </location>
</feature>
<feature type="topological domain" description="Periplasmic" evidence="1">
    <location>
        <begin position="1"/>
        <end position="26"/>
    </location>
</feature>
<feature type="transmembrane region" description="Helical" evidence="2">
    <location>
        <begin position="27"/>
        <end position="47"/>
    </location>
</feature>
<feature type="topological domain" description="Cytoplasmic" evidence="1">
    <location>
        <begin position="48"/>
        <end position="58"/>
    </location>
</feature>
<feature type="transmembrane region" description="Helical" evidence="2">
    <location>
        <begin position="59"/>
        <end position="79"/>
    </location>
</feature>
<feature type="topological domain" description="Periplasmic" evidence="1">
    <location>
        <begin position="80"/>
        <end position="104"/>
    </location>
</feature>
<feature type="transmembrane region" description="Helical" evidence="2">
    <location>
        <begin position="105"/>
        <end position="125"/>
    </location>
</feature>
<feature type="topological domain" description="Cytoplasmic" evidence="1">
    <location>
        <begin position="126"/>
        <end position="157"/>
    </location>
</feature>
<feature type="transmembrane region" description="Helical" evidence="2">
    <location>
        <begin position="158"/>
        <end position="178"/>
    </location>
</feature>
<feature type="topological domain" description="Periplasmic" evidence="1">
    <location>
        <begin position="179"/>
        <end position="199"/>
    </location>
</feature>
<feature type="transmembrane region" description="Helical" evidence="2">
    <location>
        <begin position="200"/>
        <end position="220"/>
    </location>
</feature>
<feature type="topological domain" description="Cytoplasmic" evidence="1">
    <location>
        <begin position="221"/>
        <end position="235"/>
    </location>
</feature>
<feature type="domain" description="ABC transmembrane type-1" evidence="3">
    <location>
        <begin position="23"/>
        <end position="221"/>
    </location>
</feature>